<sequence length="145" mass="16270">MLNQLENLAKCVGGNNELIDQWLQARKGLLVAYYHLIGLKPNKEKHTPLDEEALDAFCHQLVDYLSAGHFLVYDSIVPEGESSSTLTYSGLQENTQQIMALYDSHLENAIDHDNYLSFQEALSGVGEALATRFVLEDKLIQQAME</sequence>
<proteinExistence type="inferred from homology"/>
<accession>Q2NWR3</accession>
<gene>
    <name evidence="1" type="primary">rsd</name>
    <name type="ordered locus">SG0137</name>
</gene>
<name>RSD_SODGM</name>
<organism>
    <name type="scientific">Sodalis glossinidius (strain morsitans)</name>
    <dbReference type="NCBI Taxonomy" id="343509"/>
    <lineage>
        <taxon>Bacteria</taxon>
        <taxon>Pseudomonadati</taxon>
        <taxon>Pseudomonadota</taxon>
        <taxon>Gammaproteobacteria</taxon>
        <taxon>Enterobacterales</taxon>
        <taxon>Bruguierivoracaceae</taxon>
        <taxon>Sodalis</taxon>
    </lineage>
</organism>
<evidence type="ECO:0000255" key="1">
    <source>
        <dbReference type="HAMAP-Rule" id="MF_01181"/>
    </source>
</evidence>
<keyword id="KW-0963">Cytoplasm</keyword>
<keyword id="KW-0804">Transcription</keyword>
<keyword id="KW-0805">Transcription regulation</keyword>
<protein>
    <recommendedName>
        <fullName evidence="1">Regulator of sigma D</fullName>
    </recommendedName>
</protein>
<reference key="1">
    <citation type="journal article" date="2006" name="Genome Res.">
        <title>Massive genome erosion and functional adaptations provide insights into the symbiotic lifestyle of Sodalis glossinidius in the tsetse host.</title>
        <authorList>
            <person name="Toh H."/>
            <person name="Weiss B.L."/>
            <person name="Perkin S.A.H."/>
            <person name="Yamashita A."/>
            <person name="Oshima K."/>
            <person name="Hattori M."/>
            <person name="Aksoy S."/>
        </authorList>
    </citation>
    <scope>NUCLEOTIDE SEQUENCE [LARGE SCALE GENOMIC DNA]</scope>
    <source>
        <strain>morsitans</strain>
    </source>
</reference>
<feature type="chain" id="PRO_0000268890" description="Regulator of sigma D">
    <location>
        <begin position="1"/>
        <end position="145"/>
    </location>
</feature>
<comment type="function">
    <text evidence="1">Binds RpoD and negatively regulates RpoD-mediated transcription activation by preventing the interaction between the primary sigma factor RpoD with the catalytic core of the RNA polymerase and with promoter DNA. May be involved in replacement of the RNA polymerase sigma subunit from RpoD to RpoS during the transition from exponential growth to the stationary phase.</text>
</comment>
<comment type="subunit">
    <text evidence="1">Interacts with RpoD.</text>
</comment>
<comment type="subcellular location">
    <subcellularLocation>
        <location evidence="1">Cytoplasm</location>
    </subcellularLocation>
</comment>
<comment type="similarity">
    <text evidence="1">Belongs to the Rsd/AlgQ family.</text>
</comment>
<dbReference type="EMBL" id="AP008232">
    <property type="protein sequence ID" value="BAE73412.1"/>
    <property type="molecule type" value="Genomic_DNA"/>
</dbReference>
<dbReference type="SMR" id="Q2NWR3"/>
<dbReference type="STRING" id="343509.SG0137"/>
<dbReference type="KEGG" id="sgl:SG0137"/>
<dbReference type="eggNOG" id="COG3160">
    <property type="taxonomic scope" value="Bacteria"/>
</dbReference>
<dbReference type="HOGENOM" id="CLU_142729_0_0_6"/>
<dbReference type="OrthoDB" id="5567237at2"/>
<dbReference type="Proteomes" id="UP000001932">
    <property type="component" value="Chromosome"/>
</dbReference>
<dbReference type="GO" id="GO:0005737">
    <property type="term" value="C:cytoplasm"/>
    <property type="evidence" value="ECO:0007669"/>
    <property type="project" value="UniProtKB-SubCell"/>
</dbReference>
<dbReference type="GO" id="GO:0006355">
    <property type="term" value="P:regulation of DNA-templated transcription"/>
    <property type="evidence" value="ECO:0007669"/>
    <property type="project" value="InterPro"/>
</dbReference>
<dbReference type="Gene3D" id="1.20.120.1370">
    <property type="entry name" value="Regulator of RNA polymerase sigma(70) subunit, domain 4"/>
    <property type="match status" value="1"/>
</dbReference>
<dbReference type="HAMAP" id="MF_01181">
    <property type="entry name" value="Rsd"/>
    <property type="match status" value="1"/>
</dbReference>
<dbReference type="InterPro" id="IPR038309">
    <property type="entry name" value="Rsd/AlgQ_sf"/>
</dbReference>
<dbReference type="InterPro" id="IPR023785">
    <property type="entry name" value="Sigma70_reg_Rsd"/>
</dbReference>
<dbReference type="InterPro" id="IPR007448">
    <property type="entry name" value="Sigma70_reg_Rsd_AlgQ"/>
</dbReference>
<dbReference type="NCBIfam" id="NF008723">
    <property type="entry name" value="PRK11718.1"/>
    <property type="match status" value="1"/>
</dbReference>
<dbReference type="Pfam" id="PF04353">
    <property type="entry name" value="Rsd_AlgQ"/>
    <property type="match status" value="1"/>
</dbReference>
<dbReference type="PIRSF" id="PIRSF016548">
    <property type="entry name" value="Rsd_AlgQ"/>
    <property type="match status" value="1"/>
</dbReference>